<gene>
    <name evidence="1" type="primary">KAE1</name>
    <name type="ORF">SNOG_16461</name>
</gene>
<sequence>MIAIGLEGSANKIGIGVISHPGPNKTPIILSNLRHTYISPPGEGFLPKDTAIHHRAWVVRLIKQAVQQAGVKIEDIECICYTKGPGMGAPLQSVALAARTISLLWGKPVVGVNHCVGHIEMGRAITKADNPVVLYVSGGNTQVIAYSAQRYRIFGETLDIAIGNCIDRFARTLMIPNNPFPGYNVEQLAKKGKNLVDLPYGVKGMDASFSGILAAADLLAKGLDESLPLEKRLKTEEGELVTREDLCFSLQETIYAMLVEITERAMAHVGSQQVLVVGGVGSNERLQQMMGMMARDRGGSVFATDERFCIDNGIMIAHAGLLEYCTGVVTKMEDTTCTQRFRTDEVFVGWRD</sequence>
<proteinExistence type="inferred from homology"/>
<evidence type="ECO:0000255" key="1">
    <source>
        <dbReference type="HAMAP-Rule" id="MF_03180"/>
    </source>
</evidence>
<comment type="function">
    <text evidence="1">Component of the EKC/KEOPS complex that is required for the formation of a threonylcarbamoyl group on adenosine at position 37 (t(6)A37) in tRNAs that read codons beginning with adenine. The complex is probably involved in the transfer of the threonylcarbamoyl moiety of threonylcarbamoyl-AMP (TC-AMP) to the N6 group of A37. KAE1 likely plays a direct catalytic role in this reaction, but requires other protein(s) of the complex to fulfill this activity. The EKC/KEOPS complex also promotes both telomere uncapping and telomere elongation. The complex is required for efficient recruitment of transcriptional coactivators.</text>
</comment>
<comment type="catalytic activity">
    <reaction evidence="1">
        <text>L-threonylcarbamoyladenylate + adenosine(37) in tRNA = N(6)-L-threonylcarbamoyladenosine(37) in tRNA + AMP + H(+)</text>
        <dbReference type="Rhea" id="RHEA:37059"/>
        <dbReference type="Rhea" id="RHEA-COMP:10162"/>
        <dbReference type="Rhea" id="RHEA-COMP:10163"/>
        <dbReference type="ChEBI" id="CHEBI:15378"/>
        <dbReference type="ChEBI" id="CHEBI:73682"/>
        <dbReference type="ChEBI" id="CHEBI:74411"/>
        <dbReference type="ChEBI" id="CHEBI:74418"/>
        <dbReference type="ChEBI" id="CHEBI:456215"/>
        <dbReference type="EC" id="2.3.1.234"/>
    </reaction>
</comment>
<comment type="cofactor">
    <cofactor evidence="1">
        <name>a divalent metal cation</name>
        <dbReference type="ChEBI" id="CHEBI:60240"/>
    </cofactor>
    <text evidence="1">Binds 1 divalent metal cation per subunit.</text>
</comment>
<comment type="subunit">
    <text evidence="1">Component of the EKC/KEOPS complex composed of at least BUD32, CGI121, GON7, KAE1 and PCC1; the whole complex dimerizes.</text>
</comment>
<comment type="subcellular location">
    <subcellularLocation>
        <location evidence="1">Cytoplasm</location>
    </subcellularLocation>
    <subcellularLocation>
        <location evidence="1">Nucleus</location>
    </subcellularLocation>
</comment>
<comment type="similarity">
    <text evidence="1">Belongs to the KAE1 / TsaD family.</text>
</comment>
<name>KAE1_PHANO</name>
<dbReference type="EC" id="2.3.1.234" evidence="1"/>
<dbReference type="EMBL" id="CH445372">
    <property type="protein sequence ID" value="EAT76159.1"/>
    <property type="molecule type" value="Genomic_DNA"/>
</dbReference>
<dbReference type="RefSeq" id="XP_001806575.1">
    <property type="nucleotide sequence ID" value="XM_001806523.1"/>
</dbReference>
<dbReference type="SMR" id="Q0TVK3"/>
<dbReference type="FunCoup" id="Q0TVK3">
    <property type="interactions" value="555"/>
</dbReference>
<dbReference type="STRING" id="321614.Q0TVK3"/>
<dbReference type="EnsemblFungi" id="SNOT_16461">
    <property type="protein sequence ID" value="SNOT_16461"/>
    <property type="gene ID" value="SNOG_16461"/>
</dbReference>
<dbReference type="GeneID" id="5983507"/>
<dbReference type="KEGG" id="pno:SNOG_16461"/>
<dbReference type="VEuPathDB" id="FungiDB:JI435_164610"/>
<dbReference type="eggNOG" id="KOG2708">
    <property type="taxonomic scope" value="Eukaryota"/>
</dbReference>
<dbReference type="HOGENOM" id="CLU_023208_2_2_1"/>
<dbReference type="InParanoid" id="Q0TVK3"/>
<dbReference type="OMA" id="HHRSWVV"/>
<dbReference type="OrthoDB" id="10254073at2759"/>
<dbReference type="Proteomes" id="UP000001055">
    <property type="component" value="Unassembled WGS sequence"/>
</dbReference>
<dbReference type="GO" id="GO:0000785">
    <property type="term" value="C:chromatin"/>
    <property type="evidence" value="ECO:0007669"/>
    <property type="project" value="EnsemblFungi"/>
</dbReference>
<dbReference type="GO" id="GO:0005737">
    <property type="term" value="C:cytoplasm"/>
    <property type="evidence" value="ECO:0000318"/>
    <property type="project" value="GO_Central"/>
</dbReference>
<dbReference type="GO" id="GO:0000408">
    <property type="term" value="C:EKC/KEOPS complex"/>
    <property type="evidence" value="ECO:0000318"/>
    <property type="project" value="GO_Central"/>
</dbReference>
<dbReference type="GO" id="GO:0005634">
    <property type="term" value="C:nucleus"/>
    <property type="evidence" value="ECO:0007669"/>
    <property type="project" value="UniProtKB-SubCell"/>
</dbReference>
<dbReference type="GO" id="GO:0031490">
    <property type="term" value="F:chromatin DNA binding"/>
    <property type="evidence" value="ECO:0007669"/>
    <property type="project" value="EnsemblFungi"/>
</dbReference>
<dbReference type="GO" id="GO:0046872">
    <property type="term" value="F:metal ion binding"/>
    <property type="evidence" value="ECO:0007669"/>
    <property type="project" value="UniProtKB-KW"/>
</dbReference>
<dbReference type="GO" id="GO:0061711">
    <property type="term" value="F:N(6)-L-threonylcarbamoyladenine synthase activity"/>
    <property type="evidence" value="ECO:0007669"/>
    <property type="project" value="UniProtKB-EC"/>
</dbReference>
<dbReference type="GO" id="GO:0008252">
    <property type="term" value="F:nucleotidase activity"/>
    <property type="evidence" value="ECO:0007669"/>
    <property type="project" value="EnsemblFungi"/>
</dbReference>
<dbReference type="GO" id="GO:0045944">
    <property type="term" value="P:positive regulation of transcription by RNA polymerase II"/>
    <property type="evidence" value="ECO:0007669"/>
    <property type="project" value="EnsemblFungi"/>
</dbReference>
<dbReference type="GO" id="GO:0000722">
    <property type="term" value="P:telomere maintenance via recombination"/>
    <property type="evidence" value="ECO:0007669"/>
    <property type="project" value="EnsemblFungi"/>
</dbReference>
<dbReference type="GO" id="GO:0002949">
    <property type="term" value="P:tRNA threonylcarbamoyladenosine modification"/>
    <property type="evidence" value="ECO:0007669"/>
    <property type="project" value="UniProtKB-UniRule"/>
</dbReference>
<dbReference type="CDD" id="cd24132">
    <property type="entry name" value="ASKHA_NBD_OSGEP_like_euk"/>
    <property type="match status" value="1"/>
</dbReference>
<dbReference type="FunFam" id="3.30.420.40:FF:000038">
    <property type="entry name" value="Probable tRNA N6-adenosine threonylcarbamoyltransferase"/>
    <property type="match status" value="1"/>
</dbReference>
<dbReference type="FunFam" id="3.30.420.40:FF:000295">
    <property type="entry name" value="Probable tRNA N6-adenosine threonylcarbamoyltransferase"/>
    <property type="match status" value="1"/>
</dbReference>
<dbReference type="Gene3D" id="3.30.420.40">
    <property type="match status" value="2"/>
</dbReference>
<dbReference type="HAMAP" id="MF_01446">
    <property type="entry name" value="Kae1"/>
    <property type="match status" value="1"/>
</dbReference>
<dbReference type="InterPro" id="IPR043129">
    <property type="entry name" value="ATPase_NBD"/>
</dbReference>
<dbReference type="InterPro" id="IPR000905">
    <property type="entry name" value="Gcp-like_dom"/>
</dbReference>
<dbReference type="InterPro" id="IPR017861">
    <property type="entry name" value="KAE1/TsaD"/>
</dbReference>
<dbReference type="InterPro" id="IPR034680">
    <property type="entry name" value="Kae1_archaea_euk"/>
</dbReference>
<dbReference type="InterPro" id="IPR017860">
    <property type="entry name" value="Peptidase_M22_CS"/>
</dbReference>
<dbReference type="NCBIfam" id="TIGR03722">
    <property type="entry name" value="arch_KAE1"/>
    <property type="match status" value="1"/>
</dbReference>
<dbReference type="NCBIfam" id="TIGR00329">
    <property type="entry name" value="gcp_kae1"/>
    <property type="match status" value="1"/>
</dbReference>
<dbReference type="PANTHER" id="PTHR11735">
    <property type="entry name" value="TRNA N6-ADENOSINE THREONYLCARBAMOYLTRANSFERASE"/>
    <property type="match status" value="1"/>
</dbReference>
<dbReference type="PANTHER" id="PTHR11735:SF14">
    <property type="entry name" value="TRNA N6-ADENOSINE THREONYLCARBAMOYLTRANSFERASE"/>
    <property type="match status" value="1"/>
</dbReference>
<dbReference type="Pfam" id="PF00814">
    <property type="entry name" value="TsaD"/>
    <property type="match status" value="1"/>
</dbReference>
<dbReference type="PRINTS" id="PR00789">
    <property type="entry name" value="OSIALOPTASE"/>
</dbReference>
<dbReference type="SUPFAM" id="SSF53067">
    <property type="entry name" value="Actin-like ATPase domain"/>
    <property type="match status" value="1"/>
</dbReference>
<dbReference type="PROSITE" id="PS01016">
    <property type="entry name" value="GLYCOPROTEASE"/>
    <property type="match status" value="1"/>
</dbReference>
<organism>
    <name type="scientific">Phaeosphaeria nodorum (strain SN15 / ATCC MYA-4574 / FGSC 10173)</name>
    <name type="common">Glume blotch fungus</name>
    <name type="synonym">Parastagonospora nodorum</name>
    <dbReference type="NCBI Taxonomy" id="321614"/>
    <lineage>
        <taxon>Eukaryota</taxon>
        <taxon>Fungi</taxon>
        <taxon>Dikarya</taxon>
        <taxon>Ascomycota</taxon>
        <taxon>Pezizomycotina</taxon>
        <taxon>Dothideomycetes</taxon>
        <taxon>Pleosporomycetidae</taxon>
        <taxon>Pleosporales</taxon>
        <taxon>Pleosporineae</taxon>
        <taxon>Phaeosphaeriaceae</taxon>
        <taxon>Parastagonospora</taxon>
    </lineage>
</organism>
<reference key="1">
    <citation type="journal article" date="2007" name="Plant Cell">
        <title>Dothideomycete-plant interactions illuminated by genome sequencing and EST analysis of the wheat pathogen Stagonospora nodorum.</title>
        <authorList>
            <person name="Hane J.K."/>
            <person name="Lowe R.G.T."/>
            <person name="Solomon P.S."/>
            <person name="Tan K.-C."/>
            <person name="Schoch C.L."/>
            <person name="Spatafora J.W."/>
            <person name="Crous P.W."/>
            <person name="Kodira C.D."/>
            <person name="Birren B.W."/>
            <person name="Galagan J.E."/>
            <person name="Torriani S.F.F."/>
            <person name="McDonald B.A."/>
            <person name="Oliver R.P."/>
        </authorList>
    </citation>
    <scope>NUCLEOTIDE SEQUENCE [LARGE SCALE GENOMIC DNA]</scope>
    <source>
        <strain>SN15 / ATCC MYA-4574 / FGSC 10173</strain>
    </source>
</reference>
<keyword id="KW-0010">Activator</keyword>
<keyword id="KW-0012">Acyltransferase</keyword>
<keyword id="KW-0963">Cytoplasm</keyword>
<keyword id="KW-0479">Metal-binding</keyword>
<keyword id="KW-0539">Nucleus</keyword>
<keyword id="KW-0804">Transcription</keyword>
<keyword id="KW-0805">Transcription regulation</keyword>
<keyword id="KW-0808">Transferase</keyword>
<keyword id="KW-0819">tRNA processing</keyword>
<protein>
    <recommendedName>
        <fullName evidence="1">tRNA N6-adenosine threonylcarbamoyltransferase</fullName>
        <ecNumber evidence="1">2.3.1.234</ecNumber>
    </recommendedName>
    <alternativeName>
        <fullName>N6-L-threonylcarbamoyladenine synthase</fullName>
        <shortName>t(6)A synthase</shortName>
    </alternativeName>
    <alternativeName>
        <fullName evidence="1">t(6)A37 threonylcarbamoyladenosine biosynthesis protein KAE1</fullName>
    </alternativeName>
    <alternativeName>
        <fullName evidence="1">tRNA threonylcarbamoyladenosine biosynthesis protein KAE1</fullName>
    </alternativeName>
</protein>
<feature type="chain" id="PRO_0000278940" description="tRNA N6-adenosine threonylcarbamoyltransferase">
    <location>
        <begin position="1"/>
        <end position="352"/>
    </location>
</feature>
<feature type="binding site" evidence="1">
    <location>
        <position position="114"/>
    </location>
    <ligand>
        <name>a divalent metal cation</name>
        <dbReference type="ChEBI" id="CHEBI:60240"/>
    </ligand>
</feature>
<feature type="binding site" evidence="1">
    <location>
        <position position="118"/>
    </location>
    <ligand>
        <name>a divalent metal cation</name>
        <dbReference type="ChEBI" id="CHEBI:60240"/>
    </ligand>
</feature>
<feature type="binding site" evidence="1">
    <location>
        <begin position="135"/>
        <end position="139"/>
    </location>
    <ligand>
        <name>substrate</name>
    </ligand>
</feature>
<feature type="binding site" evidence="1">
    <location>
        <position position="135"/>
    </location>
    <ligand>
        <name>a divalent metal cation</name>
        <dbReference type="ChEBI" id="CHEBI:60240"/>
    </ligand>
</feature>
<feature type="binding site" evidence="1">
    <location>
        <position position="167"/>
    </location>
    <ligand>
        <name>substrate</name>
    </ligand>
</feature>
<feature type="binding site" evidence="1">
    <location>
        <position position="182"/>
    </location>
    <ligand>
        <name>substrate</name>
    </ligand>
</feature>
<feature type="binding site" evidence="1">
    <location>
        <position position="186"/>
    </location>
    <ligand>
        <name>substrate</name>
    </ligand>
</feature>
<feature type="binding site" evidence="1">
    <location>
        <position position="283"/>
    </location>
    <ligand>
        <name>substrate</name>
    </ligand>
</feature>
<feature type="binding site" evidence="1">
    <location>
        <position position="311"/>
    </location>
    <ligand>
        <name>a divalent metal cation</name>
        <dbReference type="ChEBI" id="CHEBI:60240"/>
    </ligand>
</feature>
<accession>Q0TVK3</accession>